<accession>C9JRZ8</accession>
<accession>C9J3V2</accession>
<proteinExistence type="evidence at protein level"/>
<comment type="function">
    <molecule>Isoform 1</molecule>
    <text evidence="3 4 5">Catalyzes the NADPH-dependent reduction of a variety of carbonyl substrates, like aromatic aldehydes, alkenals, ketones and alpha-dicarbonyl compounds (PubMed:21276782, PubMed:26222439). In addition, catalyzes the reduction of androgens and estrogens with high positional selectivity (shows 17-beta-hydroxysteroid dehydrogenase activity) as well as 3-keto-acyl-CoAs (PubMed:25577493). Displays strong enzymatic activity toward all-trans-retinal and 9-cis-retinal (PubMed:26222439). May play a physiological role in retinoid metabolism (PubMed:26222439).</text>
</comment>
<comment type="function">
    <molecule>Isoform 2</molecule>
    <text evidence="4">No oxidoreductase activity observed with the tested substrates.</text>
</comment>
<comment type="catalytic activity">
    <reaction evidence="4">
        <text>17beta-estradiol + NADP(+) = estrone + NADPH + H(+)</text>
        <dbReference type="Rhea" id="RHEA:24616"/>
        <dbReference type="ChEBI" id="CHEBI:15378"/>
        <dbReference type="ChEBI" id="CHEBI:16469"/>
        <dbReference type="ChEBI" id="CHEBI:17263"/>
        <dbReference type="ChEBI" id="CHEBI:57783"/>
        <dbReference type="ChEBI" id="CHEBI:58349"/>
    </reaction>
</comment>
<comment type="catalytic activity">
    <reaction evidence="4">
        <text>testosterone + NADP(+) = androst-4-ene-3,17-dione + NADPH + H(+)</text>
        <dbReference type="Rhea" id="RHEA:14981"/>
        <dbReference type="ChEBI" id="CHEBI:15378"/>
        <dbReference type="ChEBI" id="CHEBI:16422"/>
        <dbReference type="ChEBI" id="CHEBI:17347"/>
        <dbReference type="ChEBI" id="CHEBI:57783"/>
        <dbReference type="ChEBI" id="CHEBI:58349"/>
        <dbReference type="EC" id="1.1.1.64"/>
    </reaction>
</comment>
<comment type="catalytic activity">
    <reaction evidence="4">
        <text>17beta-hydroxy-5alpha-androstan-3-one + NADP(+) = 5alpha-androstan-3,17-dione + NADPH + H(+)</text>
        <dbReference type="Rhea" id="RHEA:42120"/>
        <dbReference type="ChEBI" id="CHEBI:15378"/>
        <dbReference type="ChEBI" id="CHEBI:15994"/>
        <dbReference type="ChEBI" id="CHEBI:16330"/>
        <dbReference type="ChEBI" id="CHEBI:57783"/>
        <dbReference type="ChEBI" id="CHEBI:58349"/>
    </reaction>
</comment>
<comment type="catalytic activity">
    <reaction evidence="4">
        <text>3beta-hydroxyandrost-5-en-17-one + NADPH + H(+) = androst-5-en-3beta,17beta-diol + NADP(+)</text>
        <dbReference type="Rhea" id="RHEA:46628"/>
        <dbReference type="ChEBI" id="CHEBI:2710"/>
        <dbReference type="ChEBI" id="CHEBI:15378"/>
        <dbReference type="ChEBI" id="CHEBI:28689"/>
        <dbReference type="ChEBI" id="CHEBI:57783"/>
        <dbReference type="ChEBI" id="CHEBI:58349"/>
    </reaction>
</comment>
<comment type="catalytic activity">
    <reaction evidence="4">
        <text>androsterone + NADPH + H(+) = 5alpha-androstane-3alpha,17beta-diol + NADP(+)</text>
        <dbReference type="Rhea" id="RHEA:42156"/>
        <dbReference type="ChEBI" id="CHEBI:15378"/>
        <dbReference type="ChEBI" id="CHEBI:16032"/>
        <dbReference type="ChEBI" id="CHEBI:36713"/>
        <dbReference type="ChEBI" id="CHEBI:57783"/>
        <dbReference type="ChEBI" id="CHEBI:58349"/>
    </reaction>
</comment>
<comment type="catalytic activity">
    <reaction evidence="5">
        <text>all-trans-retinol + NADP(+) = all-trans-retinal + NADPH + H(+)</text>
        <dbReference type="Rhea" id="RHEA:25033"/>
        <dbReference type="ChEBI" id="CHEBI:15378"/>
        <dbReference type="ChEBI" id="CHEBI:17336"/>
        <dbReference type="ChEBI" id="CHEBI:17898"/>
        <dbReference type="ChEBI" id="CHEBI:57783"/>
        <dbReference type="ChEBI" id="CHEBI:58349"/>
        <dbReference type="EC" id="1.1.1.300"/>
    </reaction>
</comment>
<comment type="catalytic activity">
    <reaction evidence="5">
        <text>9-cis-retinol + NADP(+) = 9-cis-retinal + NADPH + H(+)</text>
        <dbReference type="Rhea" id="RHEA:54916"/>
        <dbReference type="ChEBI" id="CHEBI:15378"/>
        <dbReference type="ChEBI" id="CHEBI:57783"/>
        <dbReference type="ChEBI" id="CHEBI:58349"/>
        <dbReference type="ChEBI" id="CHEBI:78272"/>
        <dbReference type="ChEBI" id="CHEBI:78273"/>
    </reaction>
</comment>
<comment type="catalytic activity">
    <reaction evidence="5">
        <text>allyl alcohol + NADP(+) = acrolein + NADPH + H(+)</text>
        <dbReference type="Rhea" id="RHEA:12168"/>
        <dbReference type="ChEBI" id="CHEBI:15368"/>
        <dbReference type="ChEBI" id="CHEBI:15378"/>
        <dbReference type="ChEBI" id="CHEBI:16605"/>
        <dbReference type="ChEBI" id="CHEBI:57783"/>
        <dbReference type="ChEBI" id="CHEBI:58349"/>
        <dbReference type="EC" id="1.1.1.54"/>
    </reaction>
</comment>
<comment type="catalytic activity">
    <reaction evidence="5">
        <text>(E)-hex-2-en-1-ol + NADP(+) = (E)-hex-2-enal + NADPH + H(+)</text>
        <dbReference type="Rhea" id="RHEA:58424"/>
        <dbReference type="ChEBI" id="CHEBI:15378"/>
        <dbReference type="ChEBI" id="CHEBI:28913"/>
        <dbReference type="ChEBI" id="CHEBI:57783"/>
        <dbReference type="ChEBI" id="CHEBI:58349"/>
        <dbReference type="ChEBI" id="CHEBI:141205"/>
    </reaction>
</comment>
<comment type="catalytic activity">
    <reaction evidence="5">
        <text>nonan-2-one + NADP(+) = (3E)-nonen-2-one + NADPH + H(+)</text>
        <dbReference type="Rhea" id="RHEA:50616"/>
        <dbReference type="ChEBI" id="CHEBI:15378"/>
        <dbReference type="ChEBI" id="CHEBI:57783"/>
        <dbReference type="ChEBI" id="CHEBI:58349"/>
        <dbReference type="ChEBI" id="CHEBI:77927"/>
        <dbReference type="ChEBI" id="CHEBI:133457"/>
    </reaction>
</comment>
<comment type="catalytic activity">
    <reaction evidence="5">
        <text>(2E,6E)-farnesol + NADP(+) = (2E,6E)-farnesal + NADPH + H(+)</text>
        <dbReference type="Rhea" id="RHEA:14697"/>
        <dbReference type="ChEBI" id="CHEBI:15378"/>
        <dbReference type="ChEBI" id="CHEBI:15894"/>
        <dbReference type="ChEBI" id="CHEBI:16619"/>
        <dbReference type="ChEBI" id="CHEBI:57783"/>
        <dbReference type="ChEBI" id="CHEBI:58349"/>
        <dbReference type="EC" id="1.1.1.216"/>
    </reaction>
</comment>
<comment type="catalytic activity">
    <reaction evidence="5">
        <text>acetoin + NADP(+) = diacetyl + NADPH + H(+)</text>
        <dbReference type="Rhea" id="RHEA:35607"/>
        <dbReference type="ChEBI" id="CHEBI:15378"/>
        <dbReference type="ChEBI" id="CHEBI:15688"/>
        <dbReference type="ChEBI" id="CHEBI:16583"/>
        <dbReference type="ChEBI" id="CHEBI:57783"/>
        <dbReference type="ChEBI" id="CHEBI:58349"/>
    </reaction>
</comment>
<comment type="catalytic activity">
    <reaction evidence="5">
        <text>(E)-4-hydroxynon-2-en-1-ol + NADP(+) = (E)-4-hydroxynon-2-enal + NADPH + H(+)</text>
        <dbReference type="Rhea" id="RHEA:58416"/>
        <dbReference type="ChEBI" id="CHEBI:15378"/>
        <dbReference type="ChEBI" id="CHEBI:57783"/>
        <dbReference type="ChEBI" id="CHEBI:58349"/>
        <dbReference type="ChEBI" id="CHEBI:58968"/>
        <dbReference type="ChEBI" id="CHEBI:142617"/>
    </reaction>
</comment>
<comment type="activity regulation">
    <text evidence="5">Inhibited by the inhibitor JF0064.</text>
</comment>
<comment type="biophysicochemical properties">
    <kinetics>
        <KM evidence="4">2.8 uM for androsterone (tested with isoform 1 in the reductive reaction)</KM>
        <KM evidence="4">1.9 uM for delta-4-androstenedione (tested with isoform 1 in the reductive reaction)</KM>
        <KM evidence="4">2.5 uM for estrone (tested with isoform 1 in the reductive reaction)</KM>
        <KM evidence="4">63.4 uM for acetoacetyl-CoA (tested with isoform 1 in the reductive reaction)</KM>
        <KM evidence="4">19.2 uM for 3-alpha,17-beta-androstandiol (tested with isoform 1 in the oxidative reaction)</KM>
        <KM evidence="4">7.1 uM for testosterone (tested with isoform 1 in the oxidative reaction)</KM>
        <KM evidence="4">9.1 uM for 17-beta-estradiol (tested with isoform 1 in the oxidative reaction)</KM>
        <KM evidence="5">1 uM for all-trans-retinal</KM>
        <KM evidence="5">0.16 uM for 9-cis-retinal</KM>
        <KM evidence="5">880 uM for D,L-glyceraldehyde</KM>
        <KM evidence="5">2.9 uM for pyridine-3-aldehyde</KM>
        <KM evidence="5">3.1 uM for hexanal</KM>
        <KM evidence="5">36 uM for acrolein</KM>
        <KM evidence="5">5 uM for trans-2-hexenal</KM>
        <KM evidence="5">2.2 uM for 4-hydroxy-2-nonenal</KM>
        <KM evidence="5">1.7 uM for 3-nonen-2-one</KM>
        <KM evidence="5">1 uM for 2,3-butanedione</KM>
        <KM evidence="5">1 uM for farnesal</KM>
        <KM evidence="5">5.7 uM for NADPH</KM>
        <text evidence="4 5">kcat is 1.7 min(-1) using isoform 1 for the reduction of androsterone. kcat is 1.1 min(-1) using isoform 1 for the reduction of delta-4-androstenedione. kcat is 1.0 min(-1) using isoform 1 for the reduction of estrone. kcat is 0.5 min(-1) using isoform 1 for the reduction of acetoacetyl-CoA. kcat is 3.0 min(-1) using isoform 1 for the oxidation of 3-alpha,17-beta-androstandiol. kcat is 0.6 min(-1) using isoform 1 for the oxidation of testosterone. kcat is 0.5 min(-1) using isoform 1 for the oxidation of 17-beta-estradiol (PubMed:25577493). kcat is 10.7 min(-1) with D,L-glyceraldehyde as substrate. kcat is 9 min(-1) with pyridine-3-aldehyde as substrate. kcat is 7.3 min(-1) with hexanal as substrate. kcat is 9 min(-1) with acrolein as substrate. kcat is 11.3 min(-1) with trans-2-hexenal as substrate. kcat is 5.2 min(-1) with 4-hydroxy-2-nonenal as substrate. kcat is 4.8 min(-1) with farnesal as substrate. kcat is 1.7 min(-1) with 2,3-butanedione as substrate. kcat is 5.4 min(-1) with all-trans-retinaldehyde as substrate. kcat is 3.8 min(-1) with 9-cis-retinal as substrate (PubMed:26222439).</text>
    </kinetics>
</comment>
<comment type="subunit">
    <text evidence="5">Monomer.</text>
</comment>
<comment type="interaction">
    <interactant intactId="EBI-51935374">
        <id>C9JRZ8</id>
    </interactant>
    <interactant intactId="EBI-1572139">
        <id>O60218</id>
        <label>AKR1B10</label>
    </interactant>
    <organismsDiffer>false</organismsDiffer>
    <experiments>2</experiments>
</comment>
<comment type="interaction">
    <interactant intactId="EBI-17190479">
        <id>C9JRZ8-2</id>
    </interactant>
    <interactant intactId="EBI-355744">
        <id>Q12933</id>
        <label>TRAF2</label>
    </interactant>
    <organismsDiffer>false</organismsDiffer>
    <experiments>3</experiments>
</comment>
<comment type="subcellular location">
    <molecule>Isoform 1</molecule>
    <subcellularLocation>
        <location evidence="4">Mitochondrion</location>
    </subcellularLocation>
</comment>
<comment type="subcellular location">
    <molecule>Isoform 2</molecule>
    <subcellularLocation>
        <location evidence="4">Cytoplasm</location>
        <location evidence="4">Cytosol</location>
    </subcellularLocation>
</comment>
<comment type="alternative products">
    <event type="alternative splicing"/>
    <isoform>
        <id>C9JRZ8-1</id>
        <name>1</name>
        <name evidence="6">AKR1B15.1</name>
        <sequence type="displayed"/>
    </isoform>
    <isoform>
        <id>C9JRZ8-2</id>
        <name>2</name>
        <name evidence="6">AKR1B15.2</name>
        <sequence type="described" ref="VSP_041606"/>
    </isoform>
</comment>
<comment type="tissue specificity">
    <text evidence="4">Widely expressed. Expressed at highest levels in steroid-sensitive tissues, such as placenta, testis and adipose tissue.</text>
</comment>
<comment type="miscellaneous">
    <text evidence="7">Has no counterpart in murine species.</text>
</comment>
<comment type="similarity">
    <text evidence="7">Belongs to the aldo/keto reductase family.</text>
</comment>
<dbReference type="EC" id="1.1.1.-" evidence="4"/>
<dbReference type="EC" id="1.1.1.300" evidence="5"/>
<dbReference type="EC" id="1.1.1.54" evidence="5"/>
<dbReference type="EC" id="1.1.1.216" evidence="5"/>
<dbReference type="EC" id="1.1.1.64" evidence="4"/>
<dbReference type="EMBL" id="AC078847">
    <property type="status" value="NOT_ANNOTATED_CDS"/>
    <property type="molecule type" value="Genomic_DNA"/>
</dbReference>
<dbReference type="EMBL" id="CH471070">
    <property type="protein sequence ID" value="EAW83819.1"/>
    <property type="molecule type" value="Genomic_DNA"/>
</dbReference>
<dbReference type="CCDS" id="CCDS47715.2">
    <molecule id="C9JRZ8-2"/>
</dbReference>
<dbReference type="CCDS" id="CCDS94205.1">
    <molecule id="C9JRZ8-1"/>
</dbReference>
<dbReference type="RefSeq" id="NP_001074007.2">
    <molecule id="C9JRZ8-2"/>
    <property type="nucleotide sequence ID" value="NM_001080538.3"/>
</dbReference>
<dbReference type="RefSeq" id="NP_001354749.1">
    <molecule id="C9JRZ8-2"/>
    <property type="nucleotide sequence ID" value="NM_001367820.1"/>
</dbReference>
<dbReference type="RefSeq" id="NP_001354750.1">
    <molecule id="C9JRZ8-1"/>
    <property type="nucleotide sequence ID" value="NM_001367821.1"/>
</dbReference>
<dbReference type="RefSeq" id="XP_011514543.2">
    <property type="nucleotide sequence ID" value="XM_011516241.2"/>
</dbReference>
<dbReference type="RefSeq" id="XP_016867713.1">
    <property type="nucleotide sequence ID" value="XM_017012224.1"/>
</dbReference>
<dbReference type="SMR" id="C9JRZ8"/>
<dbReference type="BioGRID" id="137330">
    <property type="interactions" value="16"/>
</dbReference>
<dbReference type="FunCoup" id="C9JRZ8">
    <property type="interactions" value="1046"/>
</dbReference>
<dbReference type="IntAct" id="C9JRZ8">
    <property type="interactions" value="4"/>
</dbReference>
<dbReference type="STRING" id="9606.ENSP00000389289"/>
<dbReference type="DrugBank" id="DB06077">
    <property type="generic name" value="Lumateperone"/>
</dbReference>
<dbReference type="SwissLipids" id="SLP:000001307">
    <molecule id="C9JRZ8-1"/>
</dbReference>
<dbReference type="iPTMnet" id="C9JRZ8"/>
<dbReference type="PhosphoSitePlus" id="C9JRZ8"/>
<dbReference type="BioMuta" id="AKR1B15"/>
<dbReference type="jPOST" id="C9JRZ8"/>
<dbReference type="MassIVE" id="C9JRZ8"/>
<dbReference type="PaxDb" id="9606-ENSP00000389289"/>
<dbReference type="PeptideAtlas" id="C9JRZ8"/>
<dbReference type="PRIDE" id="C9JRZ8"/>
<dbReference type="ProteomicsDB" id="11424">
    <molecule id="C9JRZ8-1"/>
</dbReference>
<dbReference type="ProteomicsDB" id="11425">
    <molecule id="C9JRZ8-2"/>
</dbReference>
<dbReference type="Antibodypedia" id="67875">
    <property type="antibodies" value="6 antibodies from 5 providers"/>
</dbReference>
<dbReference type="DNASU" id="441282"/>
<dbReference type="Ensembl" id="ENST00000423958.2">
    <molecule id="C9JRZ8-2"/>
    <property type="protein sequence ID" value="ENSP00000397009.2"/>
    <property type="gene ID" value="ENSG00000227471.9"/>
</dbReference>
<dbReference type="Ensembl" id="ENST00000457545.7">
    <molecule id="C9JRZ8-2"/>
    <property type="protein sequence ID" value="ENSP00000389289.1"/>
    <property type="gene ID" value="ENSG00000227471.9"/>
</dbReference>
<dbReference type="Ensembl" id="ENST00000652743.1">
    <molecule id="C9JRZ8-1"/>
    <property type="protein sequence ID" value="ENSP00000498877.1"/>
    <property type="gene ID" value="ENSG00000227471.9"/>
</dbReference>
<dbReference type="GeneID" id="441282"/>
<dbReference type="KEGG" id="hsa:441282"/>
<dbReference type="MANE-Select" id="ENST00000457545.7">
    <molecule id="C9JRZ8-2"/>
    <property type="protein sequence ID" value="ENSP00000389289.1"/>
    <property type="RefSeq nucleotide sequence ID" value="NM_001080538.3"/>
    <property type="RefSeq protein sequence ID" value="NP_001074007.2"/>
</dbReference>
<dbReference type="UCSC" id="uc011kpr.3">
    <molecule id="C9JRZ8-1"/>
    <property type="organism name" value="human"/>
</dbReference>
<dbReference type="AGR" id="HGNC:37281"/>
<dbReference type="CTD" id="441282"/>
<dbReference type="DisGeNET" id="441282"/>
<dbReference type="GeneCards" id="AKR1B15"/>
<dbReference type="HGNC" id="HGNC:37281">
    <property type="gene designation" value="AKR1B15"/>
</dbReference>
<dbReference type="HPA" id="ENSG00000227471">
    <property type="expression patterns" value="Tissue enriched (breast)"/>
</dbReference>
<dbReference type="MIM" id="616336">
    <property type="type" value="gene"/>
</dbReference>
<dbReference type="neXtProt" id="NX_C9JRZ8"/>
<dbReference type="OpenTargets" id="ENSG00000227471"/>
<dbReference type="PharmGKB" id="PA165617622"/>
<dbReference type="VEuPathDB" id="HostDB:ENSG00000227471"/>
<dbReference type="eggNOG" id="KOG1577">
    <property type="taxonomic scope" value="Eukaryota"/>
</dbReference>
<dbReference type="GeneTree" id="ENSGT00940000164182"/>
<dbReference type="HOGENOM" id="CLU_023205_0_0_1"/>
<dbReference type="InParanoid" id="C9JRZ8"/>
<dbReference type="OMA" id="LWNDSHQ"/>
<dbReference type="OrthoDB" id="416253at2759"/>
<dbReference type="PAN-GO" id="C9JRZ8">
    <property type="GO annotations" value="3 GO annotations based on evolutionary models"/>
</dbReference>
<dbReference type="TreeFam" id="TF106492"/>
<dbReference type="BRENDA" id="1.1.1.36">
    <property type="organism ID" value="2681"/>
</dbReference>
<dbReference type="BRENDA" id="1.1.1.62">
    <property type="organism ID" value="2681"/>
</dbReference>
<dbReference type="PathwayCommons" id="C9JRZ8"/>
<dbReference type="Reactome" id="R-HSA-193144">
    <property type="pathway name" value="Estrogen biosynthesis"/>
</dbReference>
<dbReference type="SignaLink" id="C9JRZ8"/>
<dbReference type="BioGRID-ORCS" id="441282">
    <property type="hits" value="213 hits in 1078 CRISPR screens"/>
</dbReference>
<dbReference type="CD-CODE" id="91857CE7">
    <property type="entry name" value="Nucleolus"/>
</dbReference>
<dbReference type="GenomeRNAi" id="441282"/>
<dbReference type="Pharos" id="C9JRZ8">
    <property type="development level" value="Tbio"/>
</dbReference>
<dbReference type="PRO" id="PR:C9JRZ8"/>
<dbReference type="Proteomes" id="UP000005640">
    <property type="component" value="Chromosome 7"/>
</dbReference>
<dbReference type="RNAct" id="C9JRZ8">
    <property type="molecule type" value="protein"/>
</dbReference>
<dbReference type="Bgee" id="ENSG00000227471">
    <property type="expression patterns" value="Expressed in male germ line stem cell (sensu Vertebrata) in testis and 73 other cell types or tissues"/>
</dbReference>
<dbReference type="GO" id="GO:0005829">
    <property type="term" value="C:cytosol"/>
    <property type="evidence" value="ECO:0000314"/>
    <property type="project" value="UniProtKB"/>
</dbReference>
<dbReference type="GO" id="GO:0005759">
    <property type="term" value="C:mitochondrial matrix"/>
    <property type="evidence" value="ECO:0000304"/>
    <property type="project" value="Reactome"/>
</dbReference>
<dbReference type="GO" id="GO:0005739">
    <property type="term" value="C:mitochondrion"/>
    <property type="evidence" value="ECO:0000314"/>
    <property type="project" value="UniProtKB"/>
</dbReference>
<dbReference type="GO" id="GO:0004032">
    <property type="term" value="F:aldose reductase (NADPH) activity"/>
    <property type="evidence" value="ECO:0000318"/>
    <property type="project" value="GO_Central"/>
</dbReference>
<dbReference type="GO" id="GO:0052650">
    <property type="term" value="F:all-trans-retinol dehydrogenase (NADP+) activity"/>
    <property type="evidence" value="ECO:0007669"/>
    <property type="project" value="UniProtKB-EC"/>
</dbReference>
<dbReference type="GO" id="GO:0047655">
    <property type="term" value="F:allyl-alcohol dehydrogenase activity"/>
    <property type="evidence" value="ECO:0007669"/>
    <property type="project" value="UniProtKB-EC"/>
</dbReference>
<dbReference type="GO" id="GO:0004303">
    <property type="term" value="F:estradiol 17-beta-dehydrogenase [NAD(P)+] activity"/>
    <property type="evidence" value="ECO:0000314"/>
    <property type="project" value="UniProtKB"/>
</dbReference>
<dbReference type="GO" id="GO:0047886">
    <property type="term" value="F:farnesol dehydrogenase activity"/>
    <property type="evidence" value="ECO:0007669"/>
    <property type="project" value="UniProtKB-EC"/>
</dbReference>
<dbReference type="GO" id="GO:0016616">
    <property type="term" value="F:oxidoreductase activity, acting on the CH-OH group of donors, NAD or NADP as acceptor"/>
    <property type="evidence" value="ECO:0000314"/>
    <property type="project" value="UniProtKB"/>
</dbReference>
<dbReference type="GO" id="GO:0047045">
    <property type="term" value="F:testosterone 17-beta-dehydrogenase (NADP+) activity"/>
    <property type="evidence" value="ECO:0007669"/>
    <property type="project" value="UniProtKB-EC"/>
</dbReference>
<dbReference type="GO" id="GO:0006703">
    <property type="term" value="P:estrogen biosynthetic process"/>
    <property type="evidence" value="ECO:0000304"/>
    <property type="project" value="Reactome"/>
</dbReference>
<dbReference type="CDD" id="cd19107">
    <property type="entry name" value="AKR_AKR1B1-19"/>
    <property type="match status" value="1"/>
</dbReference>
<dbReference type="FunFam" id="3.20.20.100:FF:000068">
    <property type="entry name" value="Aldo-keto reductase family 1 member B10"/>
    <property type="match status" value="1"/>
</dbReference>
<dbReference type="Gene3D" id="3.20.20.100">
    <property type="entry name" value="NADP-dependent oxidoreductase domain"/>
    <property type="match status" value="1"/>
</dbReference>
<dbReference type="InterPro" id="IPR020471">
    <property type="entry name" value="AKR"/>
</dbReference>
<dbReference type="InterPro" id="IPR018170">
    <property type="entry name" value="Aldo/ket_reductase_CS"/>
</dbReference>
<dbReference type="InterPro" id="IPR023210">
    <property type="entry name" value="NADP_OxRdtase_dom"/>
</dbReference>
<dbReference type="InterPro" id="IPR036812">
    <property type="entry name" value="NADP_OxRdtase_dom_sf"/>
</dbReference>
<dbReference type="PANTHER" id="PTHR11732">
    <property type="entry name" value="ALDO/KETO REDUCTASE"/>
    <property type="match status" value="1"/>
</dbReference>
<dbReference type="Pfam" id="PF00248">
    <property type="entry name" value="Aldo_ket_red"/>
    <property type="match status" value="1"/>
</dbReference>
<dbReference type="PIRSF" id="PIRSF000097">
    <property type="entry name" value="AKR"/>
    <property type="match status" value="1"/>
</dbReference>
<dbReference type="PRINTS" id="PR00069">
    <property type="entry name" value="ALDKETRDTASE"/>
</dbReference>
<dbReference type="SUPFAM" id="SSF51430">
    <property type="entry name" value="NAD(P)-linked oxidoreductase"/>
    <property type="match status" value="1"/>
</dbReference>
<dbReference type="PROSITE" id="PS00062">
    <property type="entry name" value="ALDOKETO_REDUCTASE_2"/>
    <property type="match status" value="1"/>
</dbReference>
<sequence>MATFVELSTKAKMPIVGLGTWRSLLGKVKEAVKVAIDAEYRHIDCAYFYENQHEVGEAIQEKIQEKAVMREDLFIVSKVWPTFFERPLVRKAFEKTLKDLKLSYLDVYLIHWPQGFKTGDDFFPKDDKGNMISGKGTFLDAWEAMEELVDEGLVKALGVSNFNHFQIERLLNKPGLKYKPVTNQVECHPYLTQEKLIQYCHSKGITVTAYSPLGSPDRPWAKPEDPSLLEDPKIKEIAAKHKKTTAQVLIRFHIQRNVTVIPKSMTPAHIVENIQVFDFKLSDEEMATILSFNRNWRAFDFKEFSHLEDFPFDAEY</sequence>
<keyword id="KW-0007">Acetylation</keyword>
<keyword id="KW-0025">Alternative splicing</keyword>
<keyword id="KW-0963">Cytoplasm</keyword>
<keyword id="KW-0443">Lipid metabolism</keyword>
<keyword id="KW-0496">Mitochondrion</keyword>
<keyword id="KW-0521">NADP</keyword>
<keyword id="KW-0560">Oxidoreductase</keyword>
<keyword id="KW-1267">Proteomics identification</keyword>
<keyword id="KW-1185">Reference proteome</keyword>
<feature type="chain" id="PRO_0000395341" description="Aldo-keto reductase family 1 member B15">
    <location>
        <begin position="1"/>
        <end position="316"/>
    </location>
</feature>
<feature type="active site" description="Proton donor" evidence="1">
    <location>
        <position position="49"/>
    </location>
</feature>
<feature type="binding site" evidence="1">
    <location>
        <begin position="20"/>
        <end position="22"/>
    </location>
    <ligand>
        <name>NADP(+)</name>
        <dbReference type="ChEBI" id="CHEBI:58349"/>
    </ligand>
</feature>
<feature type="binding site" evidence="1">
    <location>
        <position position="44"/>
    </location>
    <ligand>
        <name>NADP(+)</name>
        <dbReference type="ChEBI" id="CHEBI:58349"/>
    </ligand>
</feature>
<feature type="binding site" evidence="1">
    <location>
        <position position="111"/>
    </location>
    <ligand>
        <name>substrate</name>
    </ligand>
</feature>
<feature type="binding site" evidence="1">
    <location>
        <begin position="160"/>
        <end position="161"/>
    </location>
    <ligand>
        <name>NADP(+)</name>
        <dbReference type="ChEBI" id="CHEBI:58349"/>
    </ligand>
</feature>
<feature type="binding site" evidence="1">
    <location>
        <position position="184"/>
    </location>
    <ligand>
        <name>NADP(+)</name>
        <dbReference type="ChEBI" id="CHEBI:58349"/>
    </ligand>
</feature>
<feature type="binding site" evidence="1">
    <location>
        <begin position="210"/>
        <end position="217"/>
    </location>
    <ligand>
        <name>NADP(+)</name>
        <dbReference type="ChEBI" id="CHEBI:58349"/>
    </ligand>
</feature>
<feature type="binding site" evidence="1">
    <location>
        <begin position="261"/>
        <end position="273"/>
    </location>
    <ligand>
        <name>NADP(+)</name>
        <dbReference type="ChEBI" id="CHEBI:58349"/>
    </ligand>
</feature>
<feature type="site" description="Lowers pKa of active site Tyr" evidence="2">
    <location>
        <position position="78"/>
    </location>
</feature>
<feature type="modified residue" description="N6-acetyllysine" evidence="1">
    <location>
        <position position="125"/>
    </location>
</feature>
<feature type="modified residue" description="N6-acetyllysine" evidence="1">
    <location>
        <position position="263"/>
    </location>
</feature>
<feature type="splice variant" id="VSP_041606" description="In isoform 2." evidence="3 4">
    <original>MATFVELSTKAKMPIVGLGTWR</original>
    <variation>MVLQMEPQVNSTNNFHQGPLDQPVGPLTGLKSSLLKDTTSAGPLLRPYPA</variation>
    <location>
        <begin position="1"/>
        <end position="22"/>
    </location>
</feature>
<reference key="1">
    <citation type="journal article" date="2011" name="Chem. Biol. Interact.">
        <title>Functional expression of novel human and murine AKR1B genes.</title>
        <authorList>
            <person name="Salabei J.K."/>
            <person name="Li X.P."/>
            <person name="Petrash J.M."/>
            <person name="Bhatnagar A."/>
            <person name="Barski O.A."/>
        </authorList>
    </citation>
    <scope>NUCLEOTIDE SEQUENCE [MRNA] (ISOFORM 1)</scope>
    <scope>FUNCTION</scope>
    <source>
        <tissue>Eye</tissue>
        <tissue>Testis</tissue>
    </source>
</reference>
<reference key="2">
    <citation type="journal article" date="2003" name="Nature">
        <title>The DNA sequence of human chromosome 7.</title>
        <authorList>
            <person name="Hillier L.W."/>
            <person name="Fulton R.S."/>
            <person name="Fulton L.A."/>
            <person name="Graves T.A."/>
            <person name="Pepin K.H."/>
            <person name="Wagner-McPherson C."/>
            <person name="Layman D."/>
            <person name="Maas J."/>
            <person name="Jaeger S."/>
            <person name="Walker R."/>
            <person name="Wylie K."/>
            <person name="Sekhon M."/>
            <person name="Becker M.C."/>
            <person name="O'Laughlin M.D."/>
            <person name="Schaller M.E."/>
            <person name="Fewell G.A."/>
            <person name="Delehaunty K.D."/>
            <person name="Miner T.L."/>
            <person name="Nash W.E."/>
            <person name="Cordes M."/>
            <person name="Du H."/>
            <person name="Sun H."/>
            <person name="Edwards J."/>
            <person name="Bradshaw-Cordum H."/>
            <person name="Ali J."/>
            <person name="Andrews S."/>
            <person name="Isak A."/>
            <person name="Vanbrunt A."/>
            <person name="Nguyen C."/>
            <person name="Du F."/>
            <person name="Lamar B."/>
            <person name="Courtney L."/>
            <person name="Kalicki J."/>
            <person name="Ozersky P."/>
            <person name="Bielicki L."/>
            <person name="Scott K."/>
            <person name="Holmes A."/>
            <person name="Harkins R."/>
            <person name="Harris A."/>
            <person name="Strong C.M."/>
            <person name="Hou S."/>
            <person name="Tomlinson C."/>
            <person name="Dauphin-Kohlberg S."/>
            <person name="Kozlowicz-Reilly A."/>
            <person name="Leonard S."/>
            <person name="Rohlfing T."/>
            <person name="Rock S.M."/>
            <person name="Tin-Wollam A.-M."/>
            <person name="Abbott A."/>
            <person name="Minx P."/>
            <person name="Maupin R."/>
            <person name="Strowmatt C."/>
            <person name="Latreille P."/>
            <person name="Miller N."/>
            <person name="Johnson D."/>
            <person name="Murray J."/>
            <person name="Woessner J.P."/>
            <person name="Wendl M.C."/>
            <person name="Yang S.-P."/>
            <person name="Schultz B.R."/>
            <person name="Wallis J.W."/>
            <person name="Spieth J."/>
            <person name="Bieri T.A."/>
            <person name="Nelson J.O."/>
            <person name="Berkowicz N."/>
            <person name="Wohldmann P.E."/>
            <person name="Cook L.L."/>
            <person name="Hickenbotham M.T."/>
            <person name="Eldred J."/>
            <person name="Williams D."/>
            <person name="Bedell J.A."/>
            <person name="Mardis E.R."/>
            <person name="Clifton S.W."/>
            <person name="Chissoe S.L."/>
            <person name="Marra M.A."/>
            <person name="Raymond C."/>
            <person name="Haugen E."/>
            <person name="Gillett W."/>
            <person name="Zhou Y."/>
            <person name="James R."/>
            <person name="Phelps K."/>
            <person name="Iadanoto S."/>
            <person name="Bubb K."/>
            <person name="Simms E."/>
            <person name="Levy R."/>
            <person name="Clendenning J."/>
            <person name="Kaul R."/>
            <person name="Kent W.J."/>
            <person name="Furey T.S."/>
            <person name="Baertsch R.A."/>
            <person name="Brent M.R."/>
            <person name="Keibler E."/>
            <person name="Flicek P."/>
            <person name="Bork P."/>
            <person name="Suyama M."/>
            <person name="Bailey J.A."/>
            <person name="Portnoy M.E."/>
            <person name="Torrents D."/>
            <person name="Chinwalla A.T."/>
            <person name="Gish W.R."/>
            <person name="Eddy S.R."/>
            <person name="McPherson J.D."/>
            <person name="Olson M.V."/>
            <person name="Eichler E.E."/>
            <person name="Green E.D."/>
            <person name="Waterston R.H."/>
            <person name="Wilson R.K."/>
        </authorList>
    </citation>
    <scope>NUCLEOTIDE SEQUENCE [LARGE SCALE GENOMIC DNA]</scope>
</reference>
<reference key="3">
    <citation type="submission" date="2005-07" db="EMBL/GenBank/DDBJ databases">
        <authorList>
            <person name="Mural R.J."/>
            <person name="Istrail S."/>
            <person name="Sutton G.G."/>
            <person name="Florea L."/>
            <person name="Halpern A.L."/>
            <person name="Mobarry C.M."/>
            <person name="Lippert R."/>
            <person name="Walenz B."/>
            <person name="Shatkay H."/>
            <person name="Dew I."/>
            <person name="Miller J.R."/>
            <person name="Flanigan M.J."/>
            <person name="Edwards N.J."/>
            <person name="Bolanos R."/>
            <person name="Fasulo D."/>
            <person name="Halldorsson B.V."/>
            <person name="Hannenhalli S."/>
            <person name="Turner R."/>
            <person name="Yooseph S."/>
            <person name="Lu F."/>
            <person name="Nusskern D.R."/>
            <person name="Shue B.C."/>
            <person name="Zheng X.H."/>
            <person name="Zhong F."/>
            <person name="Delcher A.L."/>
            <person name="Huson D.H."/>
            <person name="Kravitz S.A."/>
            <person name="Mouchard L."/>
            <person name="Reinert K."/>
            <person name="Remington K.A."/>
            <person name="Clark A.G."/>
            <person name="Waterman M.S."/>
            <person name="Eichler E.E."/>
            <person name="Adams M.D."/>
            <person name="Hunkapiller M.W."/>
            <person name="Myers E.W."/>
            <person name="Venter J.C."/>
        </authorList>
    </citation>
    <scope>NUCLEOTIDE SEQUENCE [LARGE SCALE GENOMIC DNA]</scope>
</reference>
<reference key="4">
    <citation type="journal article" date="2015" name="J. Biol. Chem.">
        <title>Aldo-keto reductase 1B15 (AKR1B15): a mitochondrial human aldo-keto reductase with activity towards steroids and 3-keto-acyl-coa conjugates.</title>
        <authorList>
            <person name="Weber S."/>
            <person name="Salabei J.K."/>
            <person name="Moller G."/>
            <person name="Kremmer E."/>
            <person name="Bhatnagar A."/>
            <person name="Adamski J."/>
            <person name="Barski O.A."/>
        </authorList>
    </citation>
    <scope>FUNCTION (ISOFORMS 1 AND 2)</scope>
    <scope>CATALYTIC ACTIVITY (ISOFORM 1)</scope>
    <scope>BIOPHYSICOCHEMICAL PROPERTIES (ISOFORM 1)</scope>
    <scope>SUBCELLULAR LOCATION (ISOFORMS 1 AND 2)</scope>
    <scope>ALTERNATIVE SPLICING (ISOFORMS 1 AND 2)</scope>
    <scope>TISSUE SPECIFICITY</scope>
</reference>
<reference key="5">
    <citation type="journal article" date="2015" name="PLoS ONE">
        <title>Substrate Specificity, Inhibitor Selectivity and Structure-Function Relationships of Aldo-Keto Reductase 1B15: A Novel Human Retinaldehyde Reductase.</title>
        <authorList>
            <person name="Gimenez-Dejoz J."/>
            <person name="Kolar M.H."/>
            <person name="Ruiz F.X."/>
            <person name="Crespo I."/>
            <person name="Cousido-Siah A."/>
            <person name="Podjarny A."/>
            <person name="Barski O.A."/>
            <person name="Fanfrlik J."/>
            <person name="Pares X."/>
            <person name="Farres J."/>
            <person name="Porte S."/>
        </authorList>
    </citation>
    <scope>CATALYTIC ACTIVITY</scope>
    <scope>FUNCTION</scope>
    <scope>BIOPHYSICOCHEMICAL PROPERTIES</scope>
    <scope>ACTIVITY REGULATION</scope>
    <scope>SUBSTRATE SPECIFICITY</scope>
    <scope>SUBUNIT</scope>
</reference>
<evidence type="ECO:0000250" key="1">
    <source>
        <dbReference type="UniProtKB" id="O60218"/>
    </source>
</evidence>
<evidence type="ECO:0000250" key="2">
    <source>
        <dbReference type="UniProtKB" id="P14550"/>
    </source>
</evidence>
<evidence type="ECO:0000269" key="3">
    <source>
    </source>
</evidence>
<evidence type="ECO:0000269" key="4">
    <source>
    </source>
</evidence>
<evidence type="ECO:0000269" key="5">
    <source>
    </source>
</evidence>
<evidence type="ECO:0000303" key="6">
    <source>
    </source>
</evidence>
<evidence type="ECO:0000305" key="7"/>
<evidence type="ECO:0000305" key="8">
    <source>
    </source>
</evidence>
<evidence type="ECO:0000305" key="9">
    <source>
    </source>
</evidence>
<evidence type="ECO:0000312" key="10">
    <source>
        <dbReference type="HGNC" id="HGNC:37281"/>
    </source>
</evidence>
<gene>
    <name evidence="10" type="primary">AKR1B15</name>
</gene>
<protein>
    <recommendedName>
        <fullName evidence="7">Aldo-keto reductase family 1 member B15</fullName>
        <ecNumber evidence="4">1.1.1.-</ecNumber>
        <ecNumber evidence="5">1.1.1.300</ecNumber>
        <ecNumber evidence="5">1.1.1.54</ecNumber>
    </recommendedName>
    <alternativeName>
        <fullName evidence="7">Estradiol 17-beta-dehydrogenase AKR1B15</fullName>
    </alternativeName>
    <alternativeName>
        <fullName evidence="9">Farnesol dehydrogenase</fullName>
        <ecNumber evidence="5">1.1.1.216</ecNumber>
    </alternativeName>
    <alternativeName>
        <fullName evidence="8">Testosterone 17beta-dehydrogenase</fullName>
        <ecNumber evidence="4">1.1.1.64</ecNumber>
    </alternativeName>
</protein>
<name>AK1BF_HUMAN</name>
<organism>
    <name type="scientific">Homo sapiens</name>
    <name type="common">Human</name>
    <dbReference type="NCBI Taxonomy" id="9606"/>
    <lineage>
        <taxon>Eukaryota</taxon>
        <taxon>Metazoa</taxon>
        <taxon>Chordata</taxon>
        <taxon>Craniata</taxon>
        <taxon>Vertebrata</taxon>
        <taxon>Euteleostomi</taxon>
        <taxon>Mammalia</taxon>
        <taxon>Eutheria</taxon>
        <taxon>Euarchontoglires</taxon>
        <taxon>Primates</taxon>
        <taxon>Haplorrhini</taxon>
        <taxon>Catarrhini</taxon>
        <taxon>Hominidae</taxon>
        <taxon>Homo</taxon>
    </lineage>
</organism>